<proteinExistence type="evidence at protein level"/>
<dbReference type="EC" id="2.3.2.27" evidence="6 7 9 16 17"/>
<dbReference type="EMBL" id="AF170724">
    <property type="protein sequence ID" value="AAF91084.1"/>
    <property type="molecule type" value="mRNA"/>
</dbReference>
<dbReference type="EMBL" id="AK001658">
    <property type="protein sequence ID" value="BAA91817.1"/>
    <property type="molecule type" value="mRNA"/>
</dbReference>
<dbReference type="EMBL" id="AK027687">
    <property type="protein sequence ID" value="BAB55297.1"/>
    <property type="molecule type" value="mRNA"/>
</dbReference>
<dbReference type="EMBL" id="AK302785">
    <property type="protein sequence ID" value="BAG63989.1"/>
    <property type="molecule type" value="mRNA"/>
</dbReference>
<dbReference type="EMBL" id="AK304333">
    <property type="protein sequence ID" value="BAG65178.1"/>
    <property type="molecule type" value="mRNA"/>
</dbReference>
<dbReference type="EMBL" id="AC127070">
    <property type="status" value="NOT_ANNOTATED_CDS"/>
    <property type="molecule type" value="Genomic_DNA"/>
</dbReference>
<dbReference type="EMBL" id="BC012072">
    <property type="protein sequence ID" value="AAH12072.1"/>
    <property type="molecule type" value="mRNA"/>
</dbReference>
<dbReference type="EMBL" id="AL137561">
    <property type="protein sequence ID" value="CAB70812.1"/>
    <property type="molecule type" value="mRNA"/>
</dbReference>
<dbReference type="CCDS" id="CCDS31937.1">
    <molecule id="Q96EP1-3"/>
</dbReference>
<dbReference type="CCDS" id="CCDS53847.1">
    <molecule id="Q96EP1-5"/>
</dbReference>
<dbReference type="CCDS" id="CCDS53848.1">
    <molecule id="Q96EP1-2"/>
</dbReference>
<dbReference type="CCDS" id="CCDS53849.1">
    <molecule id="Q96EP1-1"/>
</dbReference>
<dbReference type="PIR" id="T46399">
    <property type="entry name" value="T46399"/>
</dbReference>
<dbReference type="RefSeq" id="NP_001154816.1">
    <molecule id="Q96EP1-1"/>
    <property type="nucleotide sequence ID" value="NM_001161344.1"/>
</dbReference>
<dbReference type="RefSeq" id="NP_001154817.1">
    <molecule id="Q96EP1-4"/>
    <property type="nucleotide sequence ID" value="NM_001161345.1"/>
</dbReference>
<dbReference type="RefSeq" id="NP_001154818.1">
    <molecule id="Q96EP1-2"/>
    <property type="nucleotide sequence ID" value="NM_001161346.2"/>
</dbReference>
<dbReference type="RefSeq" id="NP_001154819.1">
    <molecule id="Q96EP1-5"/>
    <property type="nucleotide sequence ID" value="NM_001161347.1"/>
</dbReference>
<dbReference type="RefSeq" id="NP_060693.2">
    <molecule id="Q96EP1-3"/>
    <property type="nucleotide sequence ID" value="NM_018223.2"/>
</dbReference>
<dbReference type="PDB" id="1LGP">
    <property type="method" value="X-ray"/>
    <property type="resolution" value="2.00 A"/>
    <property type="chains" value="A=14-128"/>
</dbReference>
<dbReference type="PDB" id="1LGQ">
    <property type="method" value="X-ray"/>
    <property type="resolution" value="2.10 A"/>
    <property type="chains" value="A/B=14-124"/>
</dbReference>
<dbReference type="PDB" id="2XOC">
    <property type="method" value="X-ray"/>
    <property type="resolution" value="1.89 A"/>
    <property type="chains" value="A/B=407-664"/>
</dbReference>
<dbReference type="PDB" id="2XOY">
    <property type="method" value="X-ray"/>
    <property type="resolution" value="2.60 A"/>
    <property type="chains" value="A/B=407-664"/>
</dbReference>
<dbReference type="PDB" id="2XOZ">
    <property type="method" value="X-ray"/>
    <property type="resolution" value="2.37 A"/>
    <property type="chains" value="A/B=407-664"/>
</dbReference>
<dbReference type="PDB" id="2XP0">
    <property type="method" value="X-ray"/>
    <property type="resolution" value="1.98 A"/>
    <property type="chains" value="A/B=394-664"/>
</dbReference>
<dbReference type="PDBsum" id="1LGP"/>
<dbReference type="PDBsum" id="1LGQ"/>
<dbReference type="PDBsum" id="2XOC"/>
<dbReference type="PDBsum" id="2XOY"/>
<dbReference type="PDBsum" id="2XOZ"/>
<dbReference type="PDBsum" id="2XP0"/>
<dbReference type="SMR" id="Q96EP1"/>
<dbReference type="BioGRID" id="120861">
    <property type="interactions" value="54"/>
</dbReference>
<dbReference type="DIP" id="DIP-40098N"/>
<dbReference type="FunCoup" id="Q96EP1">
    <property type="interactions" value="2120"/>
</dbReference>
<dbReference type="IntAct" id="Q96EP1">
    <property type="interactions" value="23"/>
</dbReference>
<dbReference type="STRING" id="9606.ENSP00000392395"/>
<dbReference type="iPTMnet" id="Q96EP1"/>
<dbReference type="PhosphoSitePlus" id="Q96EP1"/>
<dbReference type="BioMuta" id="CHFR"/>
<dbReference type="DMDM" id="41688511"/>
<dbReference type="jPOST" id="Q96EP1"/>
<dbReference type="MassIVE" id="Q96EP1"/>
<dbReference type="PaxDb" id="9606-ENSP00000392395"/>
<dbReference type="PeptideAtlas" id="Q96EP1"/>
<dbReference type="ProteomicsDB" id="76432">
    <molecule id="Q96EP1-1"/>
</dbReference>
<dbReference type="ProteomicsDB" id="76433">
    <molecule id="Q96EP1-2"/>
</dbReference>
<dbReference type="ProteomicsDB" id="76434">
    <molecule id="Q96EP1-3"/>
</dbReference>
<dbReference type="ProteomicsDB" id="76435">
    <molecule id="Q96EP1-4"/>
</dbReference>
<dbReference type="ProteomicsDB" id="76436">
    <molecule id="Q96EP1-5"/>
</dbReference>
<dbReference type="Pumba" id="Q96EP1"/>
<dbReference type="Antibodypedia" id="32145">
    <property type="antibodies" value="291 antibodies from 34 providers"/>
</dbReference>
<dbReference type="DNASU" id="55743"/>
<dbReference type="Ensembl" id="ENST00000266880.11">
    <molecule id="Q96EP1-3"/>
    <property type="protein sequence ID" value="ENSP00000266880.8"/>
    <property type="gene ID" value="ENSG00000072609.18"/>
</dbReference>
<dbReference type="Ensembl" id="ENST00000432561.6">
    <molecule id="Q96EP1-1"/>
    <property type="protein sequence ID" value="ENSP00000392395.2"/>
    <property type="gene ID" value="ENSG00000072609.18"/>
</dbReference>
<dbReference type="Ensembl" id="ENST00000443047.6">
    <molecule id="Q96EP1-5"/>
    <property type="protein sequence ID" value="ENSP00000416431.2"/>
    <property type="gene ID" value="ENSG00000072609.18"/>
</dbReference>
<dbReference type="Ensembl" id="ENST00000450056.7">
    <molecule id="Q96EP1-2"/>
    <property type="protein sequence ID" value="ENSP00000398735.2"/>
    <property type="gene ID" value="ENSG00000072609.18"/>
</dbReference>
<dbReference type="GeneID" id="55743"/>
<dbReference type="KEGG" id="hsa:55743"/>
<dbReference type="MANE-Select" id="ENST00000450056.7">
    <molecule id="Q96EP1-2"/>
    <property type="protein sequence ID" value="ENSP00000398735.2"/>
    <property type="RefSeq nucleotide sequence ID" value="NM_001161346.2"/>
    <property type="RefSeq protein sequence ID" value="NP_001154818.1"/>
</dbReference>
<dbReference type="UCSC" id="uc001uld.3">
    <molecule id="Q96EP1-1"/>
    <property type="organism name" value="human"/>
</dbReference>
<dbReference type="AGR" id="HGNC:20455"/>
<dbReference type="CTD" id="55743"/>
<dbReference type="DisGeNET" id="55743"/>
<dbReference type="GeneCards" id="CHFR"/>
<dbReference type="HGNC" id="HGNC:20455">
    <property type="gene designation" value="CHFR"/>
</dbReference>
<dbReference type="HPA" id="ENSG00000072609">
    <property type="expression patterns" value="Low tissue specificity"/>
</dbReference>
<dbReference type="MIM" id="605209">
    <property type="type" value="gene"/>
</dbReference>
<dbReference type="neXtProt" id="NX_Q96EP1"/>
<dbReference type="OpenTargets" id="ENSG00000072609"/>
<dbReference type="PharmGKB" id="PA134898949"/>
<dbReference type="VEuPathDB" id="HostDB:ENSG00000072609"/>
<dbReference type="eggNOG" id="KOG0802">
    <property type="taxonomic scope" value="Eukaryota"/>
</dbReference>
<dbReference type="GeneTree" id="ENSGT00400000022306"/>
<dbReference type="HOGENOM" id="CLU_032966_0_0_1"/>
<dbReference type="InParanoid" id="Q96EP1"/>
<dbReference type="OMA" id="SNYWFPG"/>
<dbReference type="OrthoDB" id="1305878at2759"/>
<dbReference type="PAN-GO" id="Q96EP1">
    <property type="GO annotations" value="5 GO annotations based on evolutionary models"/>
</dbReference>
<dbReference type="PhylomeDB" id="Q96EP1"/>
<dbReference type="TreeFam" id="TF330957"/>
<dbReference type="PathwayCommons" id="Q96EP1"/>
<dbReference type="SignaLink" id="Q96EP1"/>
<dbReference type="SIGNOR" id="Q96EP1"/>
<dbReference type="UniPathway" id="UPA00143"/>
<dbReference type="BioGRID-ORCS" id="55743">
    <property type="hits" value="8 hits in 1196 CRISPR screens"/>
</dbReference>
<dbReference type="CD-CODE" id="B5B9A610">
    <property type="entry name" value="PML body"/>
</dbReference>
<dbReference type="ChiTaRS" id="CHFR">
    <property type="organism name" value="human"/>
</dbReference>
<dbReference type="EvolutionaryTrace" id="Q96EP1"/>
<dbReference type="GeneWiki" id="CHFR"/>
<dbReference type="GenomeRNAi" id="55743"/>
<dbReference type="Pharos" id="Q96EP1">
    <property type="development level" value="Tbio"/>
</dbReference>
<dbReference type="PRO" id="PR:Q96EP1"/>
<dbReference type="Proteomes" id="UP000005640">
    <property type="component" value="Chromosome 12"/>
</dbReference>
<dbReference type="RNAct" id="Q96EP1">
    <property type="molecule type" value="protein"/>
</dbReference>
<dbReference type="Bgee" id="ENSG00000072609">
    <property type="expression patterns" value="Expressed in granulocyte and 184 other cell types or tissues"/>
</dbReference>
<dbReference type="ExpressionAtlas" id="Q96EP1">
    <property type="expression patterns" value="baseline and differential"/>
</dbReference>
<dbReference type="GO" id="GO:0005634">
    <property type="term" value="C:nucleus"/>
    <property type="evidence" value="ECO:0000314"/>
    <property type="project" value="UniProtKB"/>
</dbReference>
<dbReference type="GO" id="GO:0016605">
    <property type="term" value="C:PML body"/>
    <property type="evidence" value="ECO:0000314"/>
    <property type="project" value="UniProtKB"/>
</dbReference>
<dbReference type="GO" id="GO:0000166">
    <property type="term" value="F:nucleotide binding"/>
    <property type="evidence" value="ECO:0000314"/>
    <property type="project" value="UniProtKB"/>
</dbReference>
<dbReference type="GO" id="GO:0061630">
    <property type="term" value="F:ubiquitin protein ligase activity"/>
    <property type="evidence" value="ECO:0007669"/>
    <property type="project" value="Ensembl"/>
</dbReference>
<dbReference type="GO" id="GO:0004842">
    <property type="term" value="F:ubiquitin-protein transferase activity"/>
    <property type="evidence" value="ECO:0000314"/>
    <property type="project" value="UniProtKB"/>
</dbReference>
<dbReference type="GO" id="GO:0008270">
    <property type="term" value="F:zinc ion binding"/>
    <property type="evidence" value="ECO:0007669"/>
    <property type="project" value="UniProtKB-KW"/>
</dbReference>
<dbReference type="GO" id="GO:0051301">
    <property type="term" value="P:cell division"/>
    <property type="evidence" value="ECO:0007669"/>
    <property type="project" value="UniProtKB-KW"/>
</dbReference>
<dbReference type="GO" id="GO:0044779">
    <property type="term" value="P:meiotic spindle checkpoint signaling"/>
    <property type="evidence" value="ECO:0000315"/>
    <property type="project" value="UniProtKB"/>
</dbReference>
<dbReference type="GO" id="GO:0044818">
    <property type="term" value="P:mitotic G2/M transition checkpoint"/>
    <property type="evidence" value="ECO:0000315"/>
    <property type="project" value="UniProtKB"/>
</dbReference>
<dbReference type="GO" id="GO:0032436">
    <property type="term" value="P:positive regulation of proteasomal ubiquitin-dependent protein catabolic process"/>
    <property type="evidence" value="ECO:0007669"/>
    <property type="project" value="Ensembl"/>
</dbReference>
<dbReference type="GO" id="GO:0031398">
    <property type="term" value="P:positive regulation of protein ubiquitination"/>
    <property type="evidence" value="ECO:0007669"/>
    <property type="project" value="Ensembl"/>
</dbReference>
<dbReference type="GO" id="GO:0031648">
    <property type="term" value="P:protein destabilization"/>
    <property type="evidence" value="ECO:0007669"/>
    <property type="project" value="Ensembl"/>
</dbReference>
<dbReference type="GO" id="GO:0000209">
    <property type="term" value="P:protein polyubiquitination"/>
    <property type="evidence" value="ECO:0007669"/>
    <property type="project" value="Ensembl"/>
</dbReference>
<dbReference type="GO" id="GO:0006511">
    <property type="term" value="P:ubiquitin-dependent protein catabolic process"/>
    <property type="evidence" value="ECO:0000314"/>
    <property type="project" value="UniProtKB"/>
</dbReference>
<dbReference type="CDD" id="cd22672">
    <property type="entry name" value="FHA_CHFR"/>
    <property type="match status" value="1"/>
</dbReference>
<dbReference type="CDD" id="cd16503">
    <property type="entry name" value="RING-HC_CHFR"/>
    <property type="match status" value="1"/>
</dbReference>
<dbReference type="DisProt" id="DP02729"/>
<dbReference type="FunFam" id="3.30.40.10:FF:000203">
    <property type="entry name" value="E3 ubiquitin-protein ligase CHFR isoform X1"/>
    <property type="match status" value="1"/>
</dbReference>
<dbReference type="FunFam" id="3.30.40.140:FF:000001">
    <property type="entry name" value="E3 ubiquitin-protein ligase CHFR isoform X1"/>
    <property type="match status" value="1"/>
</dbReference>
<dbReference type="FunFam" id="2.60.200.20:FF:000022">
    <property type="entry name" value="E3 ubiquitin-protein ligase CHFR isoform X2"/>
    <property type="match status" value="1"/>
</dbReference>
<dbReference type="Gene3D" id="2.60.200.20">
    <property type="match status" value="1"/>
</dbReference>
<dbReference type="Gene3D" id="3.30.40.140">
    <property type="match status" value="1"/>
</dbReference>
<dbReference type="Gene3D" id="3.30.40.10">
    <property type="entry name" value="Zinc/RING finger domain, C3HC4 (zinc finger)"/>
    <property type="match status" value="1"/>
</dbReference>
<dbReference type="IDEAL" id="IID00097"/>
<dbReference type="InterPro" id="IPR040909">
    <property type="entry name" value="CHFR_Znf-CRD"/>
</dbReference>
<dbReference type="InterPro" id="IPR052256">
    <property type="entry name" value="E3_ubiquitin-ligase_CHFR"/>
</dbReference>
<dbReference type="InterPro" id="IPR000253">
    <property type="entry name" value="FHA_dom"/>
</dbReference>
<dbReference type="InterPro" id="IPR008984">
    <property type="entry name" value="SMAD_FHA_dom_sf"/>
</dbReference>
<dbReference type="InterPro" id="IPR001841">
    <property type="entry name" value="Znf_RING"/>
</dbReference>
<dbReference type="InterPro" id="IPR013083">
    <property type="entry name" value="Znf_RING/FYVE/PHD"/>
</dbReference>
<dbReference type="InterPro" id="IPR017907">
    <property type="entry name" value="Znf_RING_CS"/>
</dbReference>
<dbReference type="PANTHER" id="PTHR16079:SF4">
    <property type="entry name" value="E3 UBIQUITIN-PROTEIN LIGASE CHFR"/>
    <property type="match status" value="1"/>
</dbReference>
<dbReference type="PANTHER" id="PTHR16079">
    <property type="entry name" value="UBIQUITIN LIGASE PROTEIN CHFR"/>
    <property type="match status" value="1"/>
</dbReference>
<dbReference type="Pfam" id="PF00498">
    <property type="entry name" value="FHA"/>
    <property type="match status" value="1"/>
</dbReference>
<dbReference type="Pfam" id="PF13923">
    <property type="entry name" value="zf-C3HC4_2"/>
    <property type="match status" value="1"/>
</dbReference>
<dbReference type="Pfam" id="PF17979">
    <property type="entry name" value="zf-CRD"/>
    <property type="match status" value="1"/>
</dbReference>
<dbReference type="SMART" id="SM00240">
    <property type="entry name" value="FHA"/>
    <property type="match status" value="1"/>
</dbReference>
<dbReference type="SMART" id="SM00184">
    <property type="entry name" value="RING"/>
    <property type="match status" value="1"/>
</dbReference>
<dbReference type="SUPFAM" id="SSF57850">
    <property type="entry name" value="RING/U-box"/>
    <property type="match status" value="1"/>
</dbReference>
<dbReference type="SUPFAM" id="SSF49879">
    <property type="entry name" value="SMAD/FHA domain"/>
    <property type="match status" value="1"/>
</dbReference>
<dbReference type="PROSITE" id="PS50006">
    <property type="entry name" value="FHA_DOMAIN"/>
    <property type="match status" value="1"/>
</dbReference>
<dbReference type="PROSITE" id="PS00518">
    <property type="entry name" value="ZF_RING_1"/>
    <property type="match status" value="1"/>
</dbReference>
<dbReference type="PROSITE" id="PS50089">
    <property type="entry name" value="ZF_RING_2"/>
    <property type="match status" value="1"/>
</dbReference>
<accession>Q96EP1</accession>
<accession>A6NEN5</accession>
<accession>B4DZ77</accession>
<accession>B4E2L6</accession>
<accession>Q96SL3</accession>
<accession>Q9NRT4</accession>
<accession>Q9NT32</accession>
<accession>Q9NVD5</accession>
<sequence length="664" mass="73386">MERPEEGKQSPPPQPWGRLLRLGAEEGEPHVLLRKREWTIGRRRGCDLSFPSNKLVSGDHCRIVVDEKSGQVTLEDTSTSGTVINKLKVVKKQTCPLQTGDVIYLVYRKNEPEHNVAYLYESLSEKQGMTQESFEANKENVFHGTKDTSGAGAGRGADPRVPPSSPATQVCFEEPQPSTSTSDLFPTASASSTEPSPAGRERSSSCGSGGGGISPKGSGPSVASDEVSSFASALPDRKTASFSSLEPQDQEDLEPVKKKMRGDGDLDLNGQLLVAQPRRNAQTVHEDVRAAAGKPDKMEETLTCIICQDLLHDCVSLQPCMHTFCAACYSGWMERSSLCPTCRCPVERICKNHILNNLVEAYLIQHPDKSRSEEDVQSMDARNKITQDMLQPKVRRSFSDEEGSSEDLLELSDVDSESSDISQPYVVCRQCPEYRRQAAQPPHCPAPEGEPGAPQALGDAPSTSVSLTTAVQDYVCPLQGSHALCTCCFQPMPDRRAEREQDPRVAPQQCAVCLQPFCHLYWGCTRTGCYGCLAPFCELNLGDKCLDGVLNNNSYESDILKNYLATRGLTWKNMLTESLVALQRGVFLLSDYRVTGDTVLCYCCGLRSFRELTYQYRQNIPASELPVAVTSRPDCYWGRNCRTQVKAHHAMKFNHICEQTRFKN</sequence>
<protein>
    <recommendedName>
        <fullName>E3 ubiquitin-protein ligase CHFR</fullName>
        <ecNumber evidence="6 7 9 16 17">2.3.2.27</ecNumber>
    </recommendedName>
    <alternativeName>
        <fullName>Checkpoint with forkhead and RING finger domains protein</fullName>
    </alternativeName>
    <alternativeName>
        <fullName>RING finger protein 196</fullName>
    </alternativeName>
    <alternativeName>
        <fullName evidence="20">RING-type E3 ubiquitin transferase CHFR</fullName>
    </alternativeName>
</protein>
<keyword id="KW-0002">3D-structure</keyword>
<keyword id="KW-0013">ADP-ribosylation</keyword>
<keyword id="KW-0025">Alternative splicing</keyword>
<keyword id="KW-0131">Cell cycle</keyword>
<keyword id="KW-0132">Cell division</keyword>
<keyword id="KW-0479">Metal-binding</keyword>
<keyword id="KW-0498">Mitosis</keyword>
<keyword id="KW-0539">Nucleus</keyword>
<keyword id="KW-0597">Phosphoprotein</keyword>
<keyword id="KW-1267">Proteomics identification</keyword>
<keyword id="KW-1185">Reference proteome</keyword>
<keyword id="KW-0808">Transferase</keyword>
<keyword id="KW-0832">Ubl conjugation</keyword>
<keyword id="KW-0833">Ubl conjugation pathway</keyword>
<keyword id="KW-0862">Zinc</keyword>
<keyword id="KW-0863">Zinc-finger</keyword>
<organism>
    <name type="scientific">Homo sapiens</name>
    <name type="common">Human</name>
    <dbReference type="NCBI Taxonomy" id="9606"/>
    <lineage>
        <taxon>Eukaryota</taxon>
        <taxon>Metazoa</taxon>
        <taxon>Chordata</taxon>
        <taxon>Craniata</taxon>
        <taxon>Vertebrata</taxon>
        <taxon>Euteleostomi</taxon>
        <taxon>Mammalia</taxon>
        <taxon>Eutheria</taxon>
        <taxon>Euarchontoglires</taxon>
        <taxon>Primates</taxon>
        <taxon>Haplorrhini</taxon>
        <taxon>Catarrhini</taxon>
        <taxon>Hominidae</taxon>
        <taxon>Homo</taxon>
    </lineage>
</organism>
<name>CHFR_HUMAN</name>
<reference key="1">
    <citation type="journal article" date="2000" name="Nature">
        <title>Chfr defines a mitotic stress checkpoint that delays entry into metaphase.</title>
        <authorList>
            <person name="Scolnick D.M."/>
            <person name="Halazonetis T.D."/>
        </authorList>
    </citation>
    <scope>NUCLEOTIDE SEQUENCE [MRNA] (ISOFORM 1)</scope>
    <scope>FUNCTION</scope>
    <scope>TISSUE SPECIFICITY</scope>
    <scope>VARIANT MET-580</scope>
</reference>
<reference key="2">
    <citation type="journal article" date="2004" name="Nat. Genet.">
        <title>Complete sequencing and characterization of 21,243 full-length human cDNAs.</title>
        <authorList>
            <person name="Ota T."/>
            <person name="Suzuki Y."/>
            <person name="Nishikawa T."/>
            <person name="Otsuki T."/>
            <person name="Sugiyama T."/>
            <person name="Irie R."/>
            <person name="Wakamatsu A."/>
            <person name="Hayashi K."/>
            <person name="Sato H."/>
            <person name="Nagai K."/>
            <person name="Kimura K."/>
            <person name="Makita H."/>
            <person name="Sekine M."/>
            <person name="Obayashi M."/>
            <person name="Nishi T."/>
            <person name="Shibahara T."/>
            <person name="Tanaka T."/>
            <person name="Ishii S."/>
            <person name="Yamamoto J."/>
            <person name="Saito K."/>
            <person name="Kawai Y."/>
            <person name="Isono Y."/>
            <person name="Nakamura Y."/>
            <person name="Nagahari K."/>
            <person name="Murakami K."/>
            <person name="Yasuda T."/>
            <person name="Iwayanagi T."/>
            <person name="Wagatsuma M."/>
            <person name="Shiratori A."/>
            <person name="Sudo H."/>
            <person name="Hosoiri T."/>
            <person name="Kaku Y."/>
            <person name="Kodaira H."/>
            <person name="Kondo H."/>
            <person name="Sugawara M."/>
            <person name="Takahashi M."/>
            <person name="Kanda K."/>
            <person name="Yokoi T."/>
            <person name="Furuya T."/>
            <person name="Kikkawa E."/>
            <person name="Omura Y."/>
            <person name="Abe K."/>
            <person name="Kamihara K."/>
            <person name="Katsuta N."/>
            <person name="Sato K."/>
            <person name="Tanikawa M."/>
            <person name="Yamazaki M."/>
            <person name="Ninomiya K."/>
            <person name="Ishibashi T."/>
            <person name="Yamashita H."/>
            <person name="Murakawa K."/>
            <person name="Fujimori K."/>
            <person name="Tanai H."/>
            <person name="Kimata M."/>
            <person name="Watanabe M."/>
            <person name="Hiraoka S."/>
            <person name="Chiba Y."/>
            <person name="Ishida S."/>
            <person name="Ono Y."/>
            <person name="Takiguchi S."/>
            <person name="Watanabe S."/>
            <person name="Yosida M."/>
            <person name="Hotuta T."/>
            <person name="Kusano J."/>
            <person name="Kanehori K."/>
            <person name="Takahashi-Fujii A."/>
            <person name="Hara H."/>
            <person name="Tanase T.-O."/>
            <person name="Nomura Y."/>
            <person name="Togiya S."/>
            <person name="Komai F."/>
            <person name="Hara R."/>
            <person name="Takeuchi K."/>
            <person name="Arita M."/>
            <person name="Imose N."/>
            <person name="Musashino K."/>
            <person name="Yuuki H."/>
            <person name="Oshima A."/>
            <person name="Sasaki N."/>
            <person name="Aotsuka S."/>
            <person name="Yoshikawa Y."/>
            <person name="Matsunawa H."/>
            <person name="Ichihara T."/>
            <person name="Shiohata N."/>
            <person name="Sano S."/>
            <person name="Moriya S."/>
            <person name="Momiyama H."/>
            <person name="Satoh N."/>
            <person name="Takami S."/>
            <person name="Terashima Y."/>
            <person name="Suzuki O."/>
            <person name="Nakagawa S."/>
            <person name="Senoh A."/>
            <person name="Mizoguchi H."/>
            <person name="Goto Y."/>
            <person name="Shimizu F."/>
            <person name="Wakebe H."/>
            <person name="Hishigaki H."/>
            <person name="Watanabe T."/>
            <person name="Sugiyama A."/>
            <person name="Takemoto M."/>
            <person name="Kawakami B."/>
            <person name="Yamazaki M."/>
            <person name="Watanabe K."/>
            <person name="Kumagai A."/>
            <person name="Itakura S."/>
            <person name="Fukuzumi Y."/>
            <person name="Fujimori Y."/>
            <person name="Komiyama M."/>
            <person name="Tashiro H."/>
            <person name="Tanigami A."/>
            <person name="Fujiwara T."/>
            <person name="Ono T."/>
            <person name="Yamada K."/>
            <person name="Fujii Y."/>
            <person name="Ozaki K."/>
            <person name="Hirao M."/>
            <person name="Ohmori Y."/>
            <person name="Kawabata A."/>
            <person name="Hikiji T."/>
            <person name="Kobatake N."/>
            <person name="Inagaki H."/>
            <person name="Ikema Y."/>
            <person name="Okamoto S."/>
            <person name="Okitani R."/>
            <person name="Kawakami T."/>
            <person name="Noguchi S."/>
            <person name="Itoh T."/>
            <person name="Shigeta K."/>
            <person name="Senba T."/>
            <person name="Matsumura K."/>
            <person name="Nakajima Y."/>
            <person name="Mizuno T."/>
            <person name="Morinaga M."/>
            <person name="Sasaki M."/>
            <person name="Togashi T."/>
            <person name="Oyama M."/>
            <person name="Hata H."/>
            <person name="Watanabe M."/>
            <person name="Komatsu T."/>
            <person name="Mizushima-Sugano J."/>
            <person name="Satoh T."/>
            <person name="Shirai Y."/>
            <person name="Takahashi Y."/>
            <person name="Nakagawa K."/>
            <person name="Okumura K."/>
            <person name="Nagase T."/>
            <person name="Nomura N."/>
            <person name="Kikuchi H."/>
            <person name="Masuho Y."/>
            <person name="Yamashita R."/>
            <person name="Nakai K."/>
            <person name="Yada T."/>
            <person name="Nakamura Y."/>
            <person name="Ohara O."/>
            <person name="Isogai T."/>
            <person name="Sugano S."/>
        </authorList>
    </citation>
    <scope>NUCLEOTIDE SEQUENCE [LARGE SCALE MRNA] (ISOFORMS 2; 3 AND 4)</scope>
    <scope>VARIANT MET-580</scope>
    <source>
        <tissue>Teratocarcinoma</tissue>
        <tissue>Testis</tissue>
        <tissue>Trachea</tissue>
    </source>
</reference>
<reference key="3">
    <citation type="journal article" date="2006" name="Nature">
        <title>The finished DNA sequence of human chromosome 12.</title>
        <authorList>
            <person name="Scherer S.E."/>
            <person name="Muzny D.M."/>
            <person name="Buhay C.J."/>
            <person name="Chen R."/>
            <person name="Cree A."/>
            <person name="Ding Y."/>
            <person name="Dugan-Rocha S."/>
            <person name="Gill R."/>
            <person name="Gunaratne P."/>
            <person name="Harris R.A."/>
            <person name="Hawes A.C."/>
            <person name="Hernandez J."/>
            <person name="Hodgson A.V."/>
            <person name="Hume J."/>
            <person name="Jackson A."/>
            <person name="Khan Z.M."/>
            <person name="Kovar-Smith C."/>
            <person name="Lewis L.R."/>
            <person name="Lozado R.J."/>
            <person name="Metzker M.L."/>
            <person name="Milosavljevic A."/>
            <person name="Miner G.R."/>
            <person name="Montgomery K.T."/>
            <person name="Morgan M.B."/>
            <person name="Nazareth L.V."/>
            <person name="Scott G."/>
            <person name="Sodergren E."/>
            <person name="Song X.-Z."/>
            <person name="Steffen D."/>
            <person name="Lovering R.C."/>
            <person name="Wheeler D.A."/>
            <person name="Worley K.C."/>
            <person name="Yuan Y."/>
            <person name="Zhang Z."/>
            <person name="Adams C.Q."/>
            <person name="Ansari-Lari M.A."/>
            <person name="Ayele M."/>
            <person name="Brown M.J."/>
            <person name="Chen G."/>
            <person name="Chen Z."/>
            <person name="Clerc-Blankenburg K.P."/>
            <person name="Davis C."/>
            <person name="Delgado O."/>
            <person name="Dinh H.H."/>
            <person name="Draper H."/>
            <person name="Gonzalez-Garay M.L."/>
            <person name="Havlak P."/>
            <person name="Jackson L.R."/>
            <person name="Jacob L.S."/>
            <person name="Kelly S.H."/>
            <person name="Li L."/>
            <person name="Li Z."/>
            <person name="Liu J."/>
            <person name="Liu W."/>
            <person name="Lu J."/>
            <person name="Maheshwari M."/>
            <person name="Nguyen B.-V."/>
            <person name="Okwuonu G.O."/>
            <person name="Pasternak S."/>
            <person name="Perez L.M."/>
            <person name="Plopper F.J.H."/>
            <person name="Santibanez J."/>
            <person name="Shen H."/>
            <person name="Tabor P.E."/>
            <person name="Verduzco D."/>
            <person name="Waldron L."/>
            <person name="Wang Q."/>
            <person name="Williams G.A."/>
            <person name="Zhang J."/>
            <person name="Zhou J."/>
            <person name="Allen C.C."/>
            <person name="Amin A.G."/>
            <person name="Anyalebechi V."/>
            <person name="Bailey M."/>
            <person name="Barbaria J.A."/>
            <person name="Bimage K.E."/>
            <person name="Bryant N.P."/>
            <person name="Burch P.E."/>
            <person name="Burkett C.E."/>
            <person name="Burrell K.L."/>
            <person name="Calderon E."/>
            <person name="Cardenas V."/>
            <person name="Carter K."/>
            <person name="Casias K."/>
            <person name="Cavazos I."/>
            <person name="Cavazos S.R."/>
            <person name="Ceasar H."/>
            <person name="Chacko J."/>
            <person name="Chan S.N."/>
            <person name="Chavez D."/>
            <person name="Christopoulos C."/>
            <person name="Chu J."/>
            <person name="Cockrell R."/>
            <person name="Cox C.D."/>
            <person name="Dang M."/>
            <person name="Dathorne S.R."/>
            <person name="David R."/>
            <person name="Davis C.M."/>
            <person name="Davy-Carroll L."/>
            <person name="Deshazo D.R."/>
            <person name="Donlin J.E."/>
            <person name="D'Souza L."/>
            <person name="Eaves K.A."/>
            <person name="Egan A."/>
            <person name="Emery-Cohen A.J."/>
            <person name="Escotto M."/>
            <person name="Flagg N."/>
            <person name="Forbes L.D."/>
            <person name="Gabisi A.M."/>
            <person name="Garza M."/>
            <person name="Hamilton C."/>
            <person name="Henderson N."/>
            <person name="Hernandez O."/>
            <person name="Hines S."/>
            <person name="Hogues M.E."/>
            <person name="Huang M."/>
            <person name="Idlebird D.G."/>
            <person name="Johnson R."/>
            <person name="Jolivet A."/>
            <person name="Jones S."/>
            <person name="Kagan R."/>
            <person name="King L.M."/>
            <person name="Leal B."/>
            <person name="Lebow H."/>
            <person name="Lee S."/>
            <person name="LeVan J.M."/>
            <person name="Lewis L.C."/>
            <person name="London P."/>
            <person name="Lorensuhewa L.M."/>
            <person name="Loulseged H."/>
            <person name="Lovett D.A."/>
            <person name="Lucier A."/>
            <person name="Lucier R.L."/>
            <person name="Ma J."/>
            <person name="Madu R.C."/>
            <person name="Mapua P."/>
            <person name="Martindale A.D."/>
            <person name="Martinez E."/>
            <person name="Massey E."/>
            <person name="Mawhiney S."/>
            <person name="Meador M.G."/>
            <person name="Mendez S."/>
            <person name="Mercado C."/>
            <person name="Mercado I.C."/>
            <person name="Merritt C.E."/>
            <person name="Miner Z.L."/>
            <person name="Minja E."/>
            <person name="Mitchell T."/>
            <person name="Mohabbat F."/>
            <person name="Mohabbat K."/>
            <person name="Montgomery B."/>
            <person name="Moore N."/>
            <person name="Morris S."/>
            <person name="Munidasa M."/>
            <person name="Ngo R.N."/>
            <person name="Nguyen N.B."/>
            <person name="Nickerson E."/>
            <person name="Nwaokelemeh O.O."/>
            <person name="Nwokenkwo S."/>
            <person name="Obregon M."/>
            <person name="Oguh M."/>
            <person name="Oragunye N."/>
            <person name="Oviedo R.J."/>
            <person name="Parish B.J."/>
            <person name="Parker D.N."/>
            <person name="Parrish J."/>
            <person name="Parks K.L."/>
            <person name="Paul H.A."/>
            <person name="Payton B.A."/>
            <person name="Perez A."/>
            <person name="Perrin W."/>
            <person name="Pickens A."/>
            <person name="Primus E.L."/>
            <person name="Pu L.-L."/>
            <person name="Puazo M."/>
            <person name="Quiles M.M."/>
            <person name="Quiroz J.B."/>
            <person name="Rabata D."/>
            <person name="Reeves K."/>
            <person name="Ruiz S.J."/>
            <person name="Shao H."/>
            <person name="Sisson I."/>
            <person name="Sonaike T."/>
            <person name="Sorelle R.P."/>
            <person name="Sutton A.E."/>
            <person name="Svatek A.F."/>
            <person name="Svetz L.A."/>
            <person name="Tamerisa K.S."/>
            <person name="Taylor T.R."/>
            <person name="Teague B."/>
            <person name="Thomas N."/>
            <person name="Thorn R.D."/>
            <person name="Trejos Z.Y."/>
            <person name="Trevino B.K."/>
            <person name="Ukegbu O.N."/>
            <person name="Urban J.B."/>
            <person name="Vasquez L.I."/>
            <person name="Vera V.A."/>
            <person name="Villasana D.M."/>
            <person name="Wang L."/>
            <person name="Ward-Moore S."/>
            <person name="Warren J.T."/>
            <person name="Wei X."/>
            <person name="White F."/>
            <person name="Williamson A.L."/>
            <person name="Wleczyk R."/>
            <person name="Wooden H.S."/>
            <person name="Wooden S.H."/>
            <person name="Yen J."/>
            <person name="Yoon L."/>
            <person name="Yoon V."/>
            <person name="Zorrilla S.E."/>
            <person name="Nelson D."/>
            <person name="Kucherlapati R."/>
            <person name="Weinstock G."/>
            <person name="Gibbs R.A."/>
        </authorList>
    </citation>
    <scope>NUCLEOTIDE SEQUENCE [LARGE SCALE GENOMIC DNA]</scope>
</reference>
<reference key="4">
    <citation type="journal article" date="2004" name="Genome Res.">
        <title>The status, quality, and expansion of the NIH full-length cDNA project: the Mammalian Gene Collection (MGC).</title>
        <authorList>
            <consortium name="The MGC Project Team"/>
        </authorList>
    </citation>
    <scope>NUCLEOTIDE SEQUENCE [LARGE SCALE MRNA] (ISOFORM 2)</scope>
    <scope>VARIANT VAL-497</scope>
    <source>
        <tissue>Placenta</tissue>
    </source>
</reference>
<reference key="5">
    <citation type="journal article" date="2007" name="BMC Genomics">
        <title>The full-ORF clone resource of the German cDNA consortium.</title>
        <authorList>
            <person name="Bechtel S."/>
            <person name="Rosenfelder H."/>
            <person name="Duda A."/>
            <person name="Schmidt C.P."/>
            <person name="Ernst U."/>
            <person name="Wellenreuther R."/>
            <person name="Mehrle A."/>
            <person name="Schuster C."/>
            <person name="Bahr A."/>
            <person name="Bloecker H."/>
            <person name="Heubner D."/>
            <person name="Hoerlein A."/>
            <person name="Michel G."/>
            <person name="Wedler H."/>
            <person name="Koehrer K."/>
            <person name="Ottenwaelder B."/>
            <person name="Poustka A."/>
            <person name="Wiemann S."/>
            <person name="Schupp I."/>
        </authorList>
    </citation>
    <scope>NUCLEOTIDE SEQUENCE [LARGE SCALE MRNA] OF 359-664</scope>
    <source>
        <tissue>Testis</tissue>
    </source>
</reference>
<reference key="6">
    <citation type="journal article" date="2002" name="J. Cell Biol.">
        <title>The checkpoint protein Chfr is a ligase that ubiquitinates Plk1 and inhibits Cdc2 at the G2 to M transition.</title>
        <authorList>
            <person name="Kang D."/>
            <person name="Chen J."/>
            <person name="Wong J."/>
            <person name="Fang G."/>
        </authorList>
    </citation>
    <scope>FUNCTION</scope>
    <scope>CATALYTIC ACTIVITY</scope>
    <scope>AUTOUBIQUITINATION</scope>
    <scope>MUTAGENESIS OF ILE-306 AND TRP-332</scope>
</reference>
<reference key="7">
    <citation type="journal article" date="2002" name="Cancer Res.">
        <title>Chfr regulates a mitotic stress pathway through its RING-finger domain with ubiquitin ligase activity.</title>
        <authorList>
            <person name="Chaturvedi P."/>
            <person name="Sudakin V."/>
            <person name="Bobiak M.L."/>
            <person name="Fisher P.W."/>
            <person name="Mattern M.R."/>
            <person name="Jablonski S.A."/>
            <person name="Hurle M.R."/>
            <person name="Zhu Y."/>
            <person name="Yen T.J."/>
            <person name="Zhou B.-B."/>
        </authorList>
    </citation>
    <scope>FUNCTION</scope>
    <scope>CATALYTIC ACTIVITY</scope>
    <scope>AUTOUBIQUITINATION</scope>
    <scope>SUBCELLULAR LOCATION</scope>
    <scope>DEVELOPMENTAL STAGE</scope>
</reference>
<reference key="8">
    <citation type="journal article" date="2013" name="J. Proteome Res.">
        <title>Toward a comprehensive characterization of a human cancer cell phosphoproteome.</title>
        <authorList>
            <person name="Zhou H."/>
            <person name="Di Palma S."/>
            <person name="Preisinger C."/>
            <person name="Peng M."/>
            <person name="Polat A.N."/>
            <person name="Heck A.J."/>
            <person name="Mohammed S."/>
        </authorList>
    </citation>
    <scope>PHOSPHORYLATION [LARGE SCALE ANALYSIS] AT SER-244</scope>
    <scope>IDENTIFICATION BY MASS SPECTROMETRY [LARGE SCALE ANALYSIS]</scope>
    <source>
        <tissue>Erythroleukemia</tissue>
    </source>
</reference>
<reference key="9">
    <citation type="journal article" date="2002" name="Oncogene">
        <title>Aberrant hypermethylation of the CHFR prophase checkpoint gene in human lung cancers.</title>
        <authorList>
            <person name="Mizuno K."/>
            <person name="Osada H."/>
            <person name="Konishi H."/>
            <person name="Tatematsu Y."/>
            <person name="Yatabe Y."/>
            <person name="Mitsudomi T."/>
            <person name="Fujii Y."/>
            <person name="Takahashi T."/>
        </authorList>
    </citation>
    <scope>VARIANTS ARG-270; VAL-497 AND MET-580</scope>
    <scope>SILENCING IN PRIMARY CANCERS</scope>
</reference>
<reference key="10">
    <citation type="journal article" date="2003" name="Carcinogenesis">
        <title>Frequent hypermethylation of the 5' CpG island of the mitotic stress checkpoint gene Chfr in colorectal and non-small cell lung cancer.</title>
        <authorList>
            <person name="Corn P.G."/>
            <person name="Summers M.K."/>
            <person name="Fogt F."/>
            <person name="Virmani A.K."/>
            <person name="Gazdar A.F."/>
            <person name="Halazonetis T.D."/>
            <person name="El-Deiry W.S."/>
        </authorList>
    </citation>
    <scope>SILENCING IN PRIMARY CANCERS</scope>
</reference>
<reference key="11">
    <citation type="journal article" date="2003" name="Proc. Natl. Acad. Sci. U.S.A.">
        <title>Epigenetic inactivation of CHFR in human tumors.</title>
        <authorList>
            <person name="Toyota M."/>
            <person name="Sasaki Y."/>
            <person name="Satoh A."/>
            <person name="Ogi K."/>
            <person name="Kikuchi T."/>
            <person name="Suzuki H."/>
            <person name="Mita H."/>
            <person name="Tanaka N."/>
            <person name="Itoh F."/>
            <person name="Issa J.-P.J."/>
            <person name="Jair K.-W."/>
            <person name="Schuebel K.E."/>
            <person name="Imai K."/>
            <person name="Tokino T."/>
        </authorList>
    </citation>
    <scope>SILENCING IN PRIMARY CANCERS</scope>
</reference>
<reference key="12">
    <citation type="journal article" date="2003" name="Cancer Res.">
        <title>Epigenetic inactivation of CHFR and sensitivity to microtubule inhibitors in gastric cancer.</title>
        <authorList>
            <person name="Satoh A."/>
            <person name="Toyota M."/>
            <person name="Itoh F."/>
            <person name="Sasaki Y."/>
            <person name="Suzuki H."/>
            <person name="Ogi K."/>
            <person name="Kikuchi T."/>
            <person name="Mita H."/>
            <person name="Yamashita T."/>
            <person name="Kojima T."/>
            <person name="Kusano M."/>
            <person name="Fujita M."/>
            <person name="Hosokawa M."/>
            <person name="Endo T."/>
            <person name="Tokino T."/>
            <person name="Imai K."/>
        </authorList>
    </citation>
    <scope>SILENCING IN PRIMARY CANCERS</scope>
</reference>
<reference key="13">
    <citation type="journal article" date="2003" name="Mol. Cancer Res.">
        <title>Promotion of mitosis by activated protein kinase B after DNA damage involves polo-like kinase 1 and checkpoint protein CHFR.</title>
        <authorList>
            <person name="Shtivelman E."/>
        </authorList>
    </citation>
    <scope>PHOSPHORYLATION</scope>
    <scope>MUTAGENESIS OF THR-39 AND SER-205</scope>
</reference>
<reference key="14">
    <citation type="journal article" date="2003" name="Oncogene">
        <title>The Chfr mitotic checkpoint protein functions with Ubc13-Mms2 to form Lys63-linked polyubiquitin chains.</title>
        <authorList>
            <person name="Bothos J."/>
            <person name="Summers M.K."/>
            <person name="Venere M."/>
            <person name="Scolnick D.M."/>
            <person name="Halazonetis T.D."/>
        </authorList>
    </citation>
    <scope>FUNCTION</scope>
    <scope>CATALYTIC ACTIVITY</scope>
    <scope>INTERACTION WITH UBE2V2</scope>
    <scope>PHOSPHORYLATION</scope>
</reference>
<reference key="15">
    <citation type="journal article" date="2004" name="Mol. Carcinog.">
        <title>CHFR-associated early G2/M checkpoint defects in breast cancer cells.</title>
        <authorList>
            <person name="Erson A.E."/>
            <person name="Petty E.M."/>
        </authorList>
    </citation>
    <scope>FUNCTION</scope>
</reference>
<reference key="16">
    <citation type="journal article" date="2004" name="Nat. Struct. Mol. Biol.">
        <title>PML bodies control the nuclear dynamics and function of the CHFR mitotic checkpoint protein.</title>
        <authorList>
            <person name="Daniels M.J."/>
            <person name="Marson A."/>
            <person name="Venkitaraman A.R."/>
        </authorList>
    </citation>
    <scope>SUBCELLULAR LOCATION</scope>
    <scope>INTERACTION WITH PML</scope>
</reference>
<reference key="17">
    <citation type="journal article" date="2008" name="Nature">
        <title>Poly(ADP-ribose)-binding zinc finger motifs in DNA repair/checkpoint proteins.</title>
        <authorList>
            <person name="Ahel I."/>
            <person name="Ahel D."/>
            <person name="Matsusaka T."/>
            <person name="Clark A.J."/>
            <person name="Pines J."/>
            <person name="Boulton S.J."/>
            <person name="West S.C."/>
        </authorList>
    </citation>
    <scope>FUNCTION</scope>
    <scope>CATALYTIC ACTIVITY</scope>
    <scope>SUBCELLULAR LOCATION</scope>
    <scope>DOMAIN PBZ-TYPE</scope>
    <scope>POLY-ADP-RIBOSYLATION</scope>
    <scope>ADP-RIBOSE-BINDING</scope>
    <scope>MUTAGENESIS OF ARG-632; CYS-635; CYS-641; ARG-642 AND GLN-644</scope>
</reference>
<reference key="18">
    <citation type="journal article" date="2008" name="PLoS ONE">
        <title>The anti-proliferative effects of the CHFR depend on the forkhead associated domain, but not E3 ligase activity mediated by ring finger domain.</title>
        <authorList>
            <person name="Fukuda T."/>
            <person name="Kondo Y."/>
            <person name="Nakagama H."/>
        </authorList>
    </citation>
    <scope>DOMAIN FHA</scope>
</reference>
<reference key="19">
    <citation type="journal article" date="2009" name="Nat. Cell Biol.">
        <title>Chfr is linked to tumour metastasis through the downregulation of HDAC1.</title>
        <authorList>
            <person name="Oh Y.M."/>
            <person name="Kwon Y.E."/>
            <person name="Kim J.M."/>
            <person name="Bae S.J."/>
            <person name="Lee B.K."/>
            <person name="Yoo S.J."/>
            <person name="Chung C.H."/>
            <person name="Deshaies R.J."/>
            <person name="Seol J.H."/>
        </authorList>
    </citation>
    <scope>FUNCTION</scope>
    <scope>CATALYTIC ACTIVITY</scope>
    <scope>INTERACTION WITH HDAC1 AND HDAC2</scope>
    <scope>AUTOUBIQUITINATION</scope>
    <scope>MUTAGENESIS OF ILE-306</scope>
</reference>
<reference key="20">
    <citation type="journal article" date="2002" name="Structure">
        <title>Crystal structure of the FHA domain of the Chfr mitotic checkpoint protein and its complex with tungstate.</title>
        <authorList>
            <person name="Stavridi E.S."/>
            <person name="Huyen Y."/>
            <person name="Loreto I.R."/>
            <person name="Scolnick D.M."/>
            <person name="Halazonetis T.D."/>
            <person name="Pavletich N.P."/>
            <person name="Jeffrey P.D."/>
        </authorList>
    </citation>
    <scope>X-RAY CRYSTALLOGRAPHY (2.0 ANGSTROMS) OF 14-128</scope>
</reference>
<reference key="21">
    <citation type="journal article" date="2003" name="Cancer Res.">
        <title>Inactivating mutations targeting the chfr mitotic checkpoint gene in human lung cancer.</title>
        <authorList>
            <person name="Mariatos G."/>
            <person name="Bothos J."/>
            <person name="Zacharatos P."/>
            <person name="Summers M.K."/>
            <person name="Scolnick D.M."/>
            <person name="Kittas C."/>
            <person name="Halazonetis T.D."/>
            <person name="Gorgoulis V.G."/>
        </authorList>
    </citation>
    <scope>VARIANTS LEU-166; PRO-202 AND SER-536</scope>
</reference>
<comment type="function">
    <text evidence="5 6 7 9 12 16 17">E3 ubiquitin-protein ligase that functions in the antephase checkpoint by actively delaying passage into mitosis in response to microtubule poisons. Acts in early prophase before chromosome condensation, when the centrosome move apart from each other along the periphery of the nucleus. Probably involved in signaling the presence of mitotic stress caused by microtubule poisons by mediating the 'Lys-48'-linked ubiquitination of target proteins, leading to their degradation by the proteasome. Promotes the ubiquitination and subsequent degradation of AURKA and PLK1. Probably acts as a tumor suppressor, possibly by mediating the polyubiquitination of HDAC1, leading to its degradation. May also promote the formation of 'Lys-63'-linked polyubiquitin chains and functions with the specific ubiquitin-conjugating UBC13-MMS2 (UBE2N-UBE2V2) heterodimer. Substrates that are polyubiquitinated at 'Lys-63' are usually not targeted for degradation, but are rather involved in signaling cellular stress.</text>
</comment>
<comment type="catalytic activity">
    <reaction evidence="6 7 9 16 17">
        <text>S-ubiquitinyl-[E2 ubiquitin-conjugating enzyme]-L-cysteine + [acceptor protein]-L-lysine = [E2 ubiquitin-conjugating enzyme]-L-cysteine + N(6)-ubiquitinyl-[acceptor protein]-L-lysine.</text>
        <dbReference type="EC" id="2.3.2.27"/>
    </reaction>
</comment>
<comment type="pathway">
    <text>Protein modification; protein ubiquitination.</text>
</comment>
<comment type="subunit">
    <text evidence="9 14 17">Interacts with HDAC1 and HDAC2. Interacts with PML (with sumoylated form of PML).</text>
</comment>
<comment type="interaction">
    <interactant intactId="EBI-12344389">
        <id>Q96EP1-2</id>
    </interactant>
    <interactant intactId="EBI-743540">
        <id>P51668</id>
        <label>UBE2D1</label>
    </interactant>
    <organismsDiffer>false</organismsDiffer>
    <experiments>3</experiments>
</comment>
<comment type="interaction">
    <interactant intactId="EBI-12344389">
        <id>Q96EP1-2</id>
    </interactant>
    <interactant intactId="EBI-347677">
        <id>P62837</id>
        <label>UBE2D2</label>
    </interactant>
    <organismsDiffer>false</organismsDiffer>
    <experiments>3</experiments>
</comment>
<comment type="interaction">
    <interactant intactId="EBI-12344389">
        <id>Q96EP1-2</id>
    </interactant>
    <interactant intactId="EBI-2129763">
        <id>Q96LR5</id>
        <label>UBE2E2</label>
    </interactant>
    <organismsDiffer>false</organismsDiffer>
    <experiments>3</experiments>
</comment>
<comment type="interaction">
    <interactant intactId="EBI-12344389">
        <id>Q96EP1-2</id>
    </interactant>
    <interactant intactId="EBI-348496">
        <id>Q969T4</id>
        <label>UBE2E3</label>
    </interactant>
    <organismsDiffer>false</organismsDiffer>
    <experiments>3</experiments>
</comment>
<comment type="subcellular location">
    <subcellularLocation>
        <location evidence="7 14 16">Nucleus</location>
        <location evidence="7 14 16">PML body</location>
    </subcellularLocation>
</comment>
<comment type="alternative products">
    <event type="alternative splicing"/>
    <isoform>
        <id>Q96EP1-1</id>
        <name>1</name>
        <sequence type="displayed"/>
    </isoform>
    <isoform>
        <id>Q96EP1-2</id>
        <name>2</name>
        <sequence type="described" ref="VSP_009349"/>
    </isoform>
    <isoform>
        <id>Q96EP1-3</id>
        <name>3</name>
        <sequence type="described" ref="VSP_009350"/>
    </isoform>
    <isoform>
        <id>Q96EP1-4</id>
        <name>4</name>
        <sequence type="described" ref="VSP_038127"/>
    </isoform>
    <isoform>
        <id>Q96EP1-5</id>
        <name>5</name>
        <sequence type="described" ref="VSP_038126"/>
    </isoform>
</comment>
<comment type="tissue specificity">
    <text evidence="5">Ubiquitous.</text>
</comment>
<comment type="developmental stage">
    <text evidence="7">Weakly expressed in G1 phase, and highly expressed during S phase.</text>
</comment>
<comment type="domain">
    <text>The PBZ-type zinc finger (also named CYR) mediates non-covalent poly(ADP-ribose)-binding. Poly(ADP-ribose)-binding is dependent on the presence of zinc and is required for its function in antephase checkpoint.</text>
</comment>
<comment type="domain">
    <text>The FHA domain plays a key role in the anti-proliferative properties of the protein and is involved in initiating a cell cycle arrest at G2/M. The FHA domain may be required to interact with phosphorylated proteins.</text>
</comment>
<comment type="PTM">
    <text>Poly-ADP-ribosylated. In addition to binding non covalently poly(ADP-ribose) via its PBZ-type zinc finger, the protein is also covalently poly-ADP-ribosylated by PARP1.</text>
</comment>
<comment type="PTM">
    <text evidence="6 7 17">Autoubiquitinated; may regulate its cellular level.</text>
</comment>
<comment type="PTM">
    <text evidence="9 11">Phosphorylated by PKB. Phosphorylation may affect its E3 ligase activity.</text>
</comment>
<comment type="miscellaneous">
    <text>CHFR is silenced in many primary cancers because of CpG methylation and deacetylated histones on its promoter region. This however raises the question of whether CHFR silencing is a consequence or a cause of primary cancers.</text>
</comment>
<comment type="similarity">
    <text evidence="20">Belongs to the CHFR family.</text>
</comment>
<comment type="online information" name="Atlas of Genetics and Cytogenetics in Oncology and Haematology">
    <link uri="https://atlasgeneticsoncology.org/gene/526/CHFR"/>
</comment>
<evidence type="ECO:0000250" key="1">
    <source>
        <dbReference type="UniProtKB" id="Q810L3"/>
    </source>
</evidence>
<evidence type="ECO:0000255" key="2">
    <source>
        <dbReference type="PROSITE-ProRule" id="PRU00086"/>
    </source>
</evidence>
<evidence type="ECO:0000255" key="3">
    <source>
        <dbReference type="PROSITE-ProRule" id="PRU00175"/>
    </source>
</evidence>
<evidence type="ECO:0000256" key="4">
    <source>
        <dbReference type="SAM" id="MobiDB-lite"/>
    </source>
</evidence>
<evidence type="ECO:0000269" key="5">
    <source>
    </source>
</evidence>
<evidence type="ECO:0000269" key="6">
    <source>
    </source>
</evidence>
<evidence type="ECO:0000269" key="7">
    <source>
    </source>
</evidence>
<evidence type="ECO:0000269" key="8">
    <source>
    </source>
</evidence>
<evidence type="ECO:0000269" key="9">
    <source>
    </source>
</evidence>
<evidence type="ECO:0000269" key="10">
    <source>
    </source>
</evidence>
<evidence type="ECO:0000269" key="11">
    <source>
    </source>
</evidence>
<evidence type="ECO:0000269" key="12">
    <source>
    </source>
</evidence>
<evidence type="ECO:0000269" key="13">
    <source>
    </source>
</evidence>
<evidence type="ECO:0000269" key="14">
    <source>
    </source>
</evidence>
<evidence type="ECO:0000269" key="15">
    <source>
    </source>
</evidence>
<evidence type="ECO:0000269" key="16">
    <source>
    </source>
</evidence>
<evidence type="ECO:0000269" key="17">
    <source>
    </source>
</evidence>
<evidence type="ECO:0000303" key="18">
    <source>
    </source>
</evidence>
<evidence type="ECO:0000303" key="19">
    <source>
    </source>
</evidence>
<evidence type="ECO:0000305" key="20"/>
<evidence type="ECO:0007744" key="21">
    <source>
    </source>
</evidence>
<evidence type="ECO:0007829" key="22">
    <source>
        <dbReference type="PDB" id="1LGP"/>
    </source>
</evidence>
<evidence type="ECO:0007829" key="23">
    <source>
        <dbReference type="PDB" id="1LGQ"/>
    </source>
</evidence>
<evidence type="ECO:0007829" key="24">
    <source>
        <dbReference type="PDB" id="2XOC"/>
    </source>
</evidence>
<evidence type="ECO:0007829" key="25">
    <source>
        <dbReference type="PDB" id="2XP0"/>
    </source>
</evidence>
<gene>
    <name type="primary">CHFR</name>
    <name type="synonym">RNF196</name>
</gene>
<feature type="chain" id="PRO_0000055872" description="E3 ubiquitin-protein ligase CHFR">
    <location>
        <begin position="1"/>
        <end position="664"/>
    </location>
</feature>
<feature type="domain" description="FHA" evidence="2">
    <location>
        <begin position="38"/>
        <end position="89"/>
    </location>
</feature>
<feature type="zinc finger region" description="RING-type" evidence="3">
    <location>
        <begin position="304"/>
        <end position="343"/>
    </location>
</feature>
<feature type="zinc finger region" description="PBZ-type">
    <location>
        <begin position="633"/>
        <end position="655"/>
    </location>
</feature>
<feature type="region of interest" description="Disordered" evidence="4">
    <location>
        <begin position="1"/>
        <end position="21"/>
    </location>
</feature>
<feature type="region of interest" description="Disordered" evidence="4">
    <location>
        <begin position="142"/>
        <end position="267"/>
    </location>
</feature>
<feature type="region of interest" description="Disordered" evidence="4">
    <location>
        <begin position="388"/>
        <end position="417"/>
    </location>
</feature>
<feature type="region of interest" description="Disordered" evidence="4">
    <location>
        <begin position="439"/>
        <end position="461"/>
    </location>
</feature>
<feature type="compositionally biased region" description="Low complexity" evidence="4">
    <location>
        <begin position="186"/>
        <end position="198"/>
    </location>
</feature>
<feature type="compositionally biased region" description="Basic and acidic residues" evidence="4">
    <location>
        <begin position="254"/>
        <end position="264"/>
    </location>
</feature>
<feature type="compositionally biased region" description="Acidic residues" evidence="4">
    <location>
        <begin position="400"/>
        <end position="417"/>
    </location>
</feature>
<feature type="modified residue" description="Phosphoserine" evidence="21">
    <location>
        <position position="244"/>
    </location>
</feature>
<feature type="modified residue" description="Phosphothreonine" evidence="1">
    <location>
        <position position="386"/>
    </location>
</feature>
<feature type="splice variant" id="VSP_038126" description="In isoform 5." evidence="20">
    <original>NVAYLYESLSEKQGMTQESFEANKENVFHGTKDTSGAGAGRGADPRVPPSSPATQVCFEEPQPSTSTSDLFPTASASSTEPSPAGRERSSSCG</original>
    <variation>R</variation>
    <location>
        <begin position="115"/>
        <end position="207"/>
    </location>
</feature>
<feature type="splice variant" id="VSP_009349" description="In isoform 2." evidence="18 19">
    <location>
        <begin position="135"/>
        <end position="146"/>
    </location>
</feature>
<feature type="splice variant" id="VSP_009350" description="In isoform 3." evidence="18">
    <original>ANKENVFHGTKDTSGAGAGRGADPRVPPSSPATQVCFEEPQPSTSTSDLFPTASASSTEPSPAGRERSSSC</original>
    <variation>MVPCCVAQAGLKLLGSSDPPTLASQSIVIT</variation>
    <location>
        <begin position="136"/>
        <end position="206"/>
    </location>
</feature>
<feature type="splice variant" id="VSP_038127" description="In isoform 4." evidence="18">
    <location>
        <position position="470"/>
    </location>
</feature>
<feature type="sequence variant" id="VAR_017582" description="In a patient with non small cell lung carcinomas; homozygous; dbSNP:rs1176037831." evidence="10">
    <original>P</original>
    <variation>L</variation>
    <location>
        <position position="166"/>
    </location>
</feature>
<feature type="sequence variant" id="VAR_017583" description="In a patient with non small cell lung carcinomas." evidence="10">
    <original>R</original>
    <variation>P</variation>
    <location>
        <position position="202"/>
    </location>
</feature>
<feature type="sequence variant" id="VAR_017584" description="In dbSNP:rs115096950." evidence="8">
    <original>G</original>
    <variation>R</variation>
    <location>
        <position position="270"/>
    </location>
</feature>
<feature type="sequence variant" id="VAR_017585" description="In dbSNP:rs2306541." evidence="8 15">
    <original>A</original>
    <variation>V</variation>
    <location>
        <position position="497"/>
    </location>
</feature>
<feature type="sequence variant" id="VAR_017586" description="In a patient with non small cell lung carcinomas." evidence="10">
    <original>F</original>
    <variation>S</variation>
    <location>
        <position position="536"/>
    </location>
</feature>
<feature type="sequence variant" id="VAR_017587" description="In dbSNP:rs2306536." evidence="5 8 13">
    <original>V</original>
    <variation>M</variation>
    <location>
        <position position="580"/>
    </location>
</feature>
<feature type="mutagenesis site" description="Abolishes phosphorylation but not autoubiquitination; when associated with A-205." evidence="11">
    <original>T</original>
    <variation>A</variation>
    <location>
        <position position="39"/>
    </location>
</feature>
<feature type="mutagenesis site" description="Abolishes phosphorylation but not autoubiquitination; when associated with A-39." evidence="11">
    <original>S</original>
    <variation>A</variation>
    <location>
        <position position="205"/>
    </location>
</feature>
<feature type="mutagenesis site" description="Abolishes autoubiquitination. Does not affect phosphorylation." evidence="6 17">
    <original>I</original>
    <variation>A</variation>
    <location>
        <position position="306"/>
    </location>
</feature>
<feature type="mutagenesis site" description="Abolishes autoubiquitination in vitro." evidence="6">
    <original>W</original>
    <variation>A</variation>
    <location>
        <position position="332"/>
    </location>
</feature>
<feature type="mutagenesis site" description="Abolishes poly(ADP-ribose)-binding and poly-ADP-ribosylation by PARP1." evidence="16">
    <original>R</original>
    <variation>A</variation>
    <location>
        <position position="632"/>
    </location>
</feature>
<feature type="mutagenesis site" description="Abolishes poly(ADP-ribose)-binding and poly-ADP-ribosylation by PARP1; when associated with A-641." evidence="16">
    <original>C</original>
    <variation>A</variation>
    <location>
        <position position="635"/>
    </location>
</feature>
<feature type="mutagenesis site" description="Abolishes poly(ADP-ribose)-binding and poly-ADP-ribosylation by PARP1; when associated with A-635." evidence="16">
    <original>C</original>
    <variation>A</variation>
    <location>
        <position position="641"/>
    </location>
</feature>
<feature type="mutagenesis site" description="Impairs poly(ADP-ribose)-binding and poly-ADP-ribosylation by PARP1." evidence="16">
    <original>R</original>
    <variation>A</variation>
    <location>
        <position position="642"/>
    </location>
</feature>
<feature type="mutagenesis site" description="Impairs poly(ADP-ribose)-binding and poly-ADP-ribosylation by PARP1." evidence="16">
    <original>Q</original>
    <variation>A</variation>
    <location>
        <position position="644"/>
    </location>
</feature>
<feature type="sequence conflict" description="In Ref. 2; BAA91817." evidence="20" ref="2">
    <original>V</original>
    <variation>E</variation>
    <location>
        <position position="256"/>
    </location>
</feature>
<feature type="sequence conflict" description="In Ref. 2; BAA91817." evidence="20" ref="2">
    <original>S</original>
    <variation>P</variation>
    <location>
        <position position="462"/>
    </location>
</feature>
<feature type="sequence conflict" description="In Ref. 2; BAG65178." evidence="20" ref="2">
    <original>V</original>
    <variation>A</variation>
    <location>
        <position position="599"/>
    </location>
</feature>
<feature type="sequence conflict" description="In Ref. 2; BAA91817." evidence="20" ref="2">
    <original>R</original>
    <variation>Q</variation>
    <location>
        <position position="617"/>
    </location>
</feature>
<feature type="strand" evidence="22">
    <location>
        <begin position="17"/>
        <end position="19"/>
    </location>
</feature>
<feature type="strand" evidence="22">
    <location>
        <begin position="26"/>
        <end position="28"/>
    </location>
</feature>
<feature type="strand" evidence="22">
    <location>
        <begin position="31"/>
        <end position="33"/>
    </location>
</feature>
<feature type="strand" evidence="22">
    <location>
        <begin position="35"/>
        <end position="43"/>
    </location>
</feature>
<feature type="strand" evidence="22">
    <location>
        <begin position="46"/>
        <end position="49"/>
    </location>
</feature>
<feature type="strand" evidence="22">
    <location>
        <begin position="61"/>
        <end position="65"/>
    </location>
</feature>
<feature type="turn" evidence="22">
    <location>
        <begin position="67"/>
        <end position="69"/>
    </location>
</feature>
<feature type="strand" evidence="22">
    <location>
        <begin position="72"/>
        <end position="76"/>
    </location>
</feature>
<feature type="strand" evidence="22">
    <location>
        <begin position="78"/>
        <end position="80"/>
    </location>
</feature>
<feature type="strand" evidence="23">
    <location>
        <begin position="82"/>
        <end position="90"/>
    </location>
</feature>
<feature type="strand" evidence="23">
    <location>
        <begin position="92"/>
        <end position="96"/>
    </location>
</feature>
<feature type="strand" evidence="22">
    <location>
        <begin position="102"/>
        <end position="106"/>
    </location>
</feature>
<feature type="helix" evidence="22">
    <location>
        <begin position="112"/>
        <end position="114"/>
    </location>
</feature>
<feature type="strand" evidence="22">
    <location>
        <begin position="116"/>
        <end position="119"/>
    </location>
</feature>
<feature type="helix" evidence="24">
    <location>
        <begin position="433"/>
        <end position="436"/>
    </location>
</feature>
<feature type="strand" evidence="24">
    <location>
        <begin position="482"/>
        <end position="484"/>
    </location>
</feature>
<feature type="turn" evidence="24">
    <location>
        <begin position="486"/>
        <end position="488"/>
    </location>
</feature>
<feature type="strand" evidence="24">
    <location>
        <begin position="491"/>
        <end position="493"/>
    </location>
</feature>
<feature type="helix" evidence="24">
    <location>
        <begin position="496"/>
        <end position="500"/>
    </location>
</feature>
<feature type="turn" evidence="24">
    <location>
        <begin position="511"/>
        <end position="513"/>
    </location>
</feature>
<feature type="helix" evidence="24">
    <location>
        <begin position="519"/>
        <end position="522"/>
    </location>
</feature>
<feature type="strand" evidence="24">
    <location>
        <begin position="532"/>
        <end position="535"/>
    </location>
</feature>
<feature type="helix" evidence="24">
    <location>
        <begin position="536"/>
        <end position="538"/>
    </location>
</feature>
<feature type="turn" evidence="24">
    <location>
        <begin position="543"/>
        <end position="552"/>
    </location>
</feature>
<feature type="helix" evidence="24">
    <location>
        <begin position="554"/>
        <end position="566"/>
    </location>
</feature>
<feature type="helix" evidence="24">
    <location>
        <begin position="571"/>
        <end position="583"/>
    </location>
</feature>
<feature type="strand" evidence="24">
    <location>
        <begin position="599"/>
        <end position="601"/>
    </location>
</feature>
<feature type="helix" evidence="24">
    <location>
        <begin position="602"/>
        <end position="618"/>
    </location>
</feature>
<feature type="helix" evidence="24">
    <location>
        <begin position="622"/>
        <end position="624"/>
    </location>
</feature>
<feature type="helix" evidence="24">
    <location>
        <begin position="627"/>
        <end position="630"/>
    </location>
</feature>
<feature type="helix" evidence="24">
    <location>
        <begin position="638"/>
        <end position="640"/>
    </location>
</feature>
<feature type="helix" evidence="25">
    <location>
        <begin position="643"/>
        <end position="645"/>
    </location>
</feature>
<feature type="helix" evidence="24">
    <location>
        <begin position="647"/>
        <end position="652"/>
    </location>
</feature>